<comment type="function">
    <text evidence="2">Could be a mediator in iron transactions between iron acquisition and iron-requiring processes, such as synthesis and/or repair of Fe-S clusters in biosynthetic enzymes.</text>
</comment>
<comment type="subunit">
    <text evidence="2">Monomer.</text>
</comment>
<comment type="similarity">
    <text evidence="2">Belongs to the Fe(2+)-trafficking protein family.</text>
</comment>
<accession>P67618</accession>
<accession>Q8XFV6</accession>
<sequence length="91" mass="10899">MSRTIFCTYLQRDAEGQDFQLYPGELGKRIYNEISKDAWAQWQHKQTMLINEKKLNMMNAEHRKLLEQEMVSFLFEGKDVHIEGYTPEDKK</sequence>
<name>FETP_SALTI</name>
<organism>
    <name type="scientific">Salmonella typhi</name>
    <dbReference type="NCBI Taxonomy" id="90370"/>
    <lineage>
        <taxon>Bacteria</taxon>
        <taxon>Pseudomonadati</taxon>
        <taxon>Pseudomonadota</taxon>
        <taxon>Gammaproteobacteria</taxon>
        <taxon>Enterobacterales</taxon>
        <taxon>Enterobacteriaceae</taxon>
        <taxon>Salmonella</taxon>
    </lineage>
</organism>
<evidence type="ECO:0000250" key="1"/>
<evidence type="ECO:0000255" key="2">
    <source>
        <dbReference type="HAMAP-Rule" id="MF_00686"/>
    </source>
</evidence>
<protein>
    <recommendedName>
        <fullName evidence="2">Probable Fe(2+)-trafficking protein</fullName>
    </recommendedName>
</protein>
<dbReference type="EMBL" id="AL513382">
    <property type="protein sequence ID" value="CAD02936.1"/>
    <property type="molecule type" value="Genomic_DNA"/>
</dbReference>
<dbReference type="EMBL" id="AE014613">
    <property type="protein sequence ID" value="AAO70576.1"/>
    <property type="molecule type" value="Genomic_DNA"/>
</dbReference>
<dbReference type="RefSeq" id="NP_457504.1">
    <property type="nucleotide sequence ID" value="NC_003198.1"/>
</dbReference>
<dbReference type="RefSeq" id="WP_000091706.1">
    <property type="nucleotide sequence ID" value="NZ_WSUR01000003.1"/>
</dbReference>
<dbReference type="SMR" id="P67618"/>
<dbReference type="STRING" id="220341.gene:17587138"/>
<dbReference type="KEGG" id="stt:t3024"/>
<dbReference type="KEGG" id="sty:STY3266"/>
<dbReference type="PATRIC" id="fig|220341.7.peg.3331"/>
<dbReference type="eggNOG" id="COG2924">
    <property type="taxonomic scope" value="Bacteria"/>
</dbReference>
<dbReference type="HOGENOM" id="CLU_170994_0_0_6"/>
<dbReference type="OMA" id="NCIKLGR"/>
<dbReference type="OrthoDB" id="9804318at2"/>
<dbReference type="Proteomes" id="UP000000541">
    <property type="component" value="Chromosome"/>
</dbReference>
<dbReference type="Proteomes" id="UP000002670">
    <property type="component" value="Chromosome"/>
</dbReference>
<dbReference type="GO" id="GO:0005829">
    <property type="term" value="C:cytosol"/>
    <property type="evidence" value="ECO:0007669"/>
    <property type="project" value="TreeGrafter"/>
</dbReference>
<dbReference type="GO" id="GO:0005506">
    <property type="term" value="F:iron ion binding"/>
    <property type="evidence" value="ECO:0007669"/>
    <property type="project" value="UniProtKB-UniRule"/>
</dbReference>
<dbReference type="GO" id="GO:0034599">
    <property type="term" value="P:cellular response to oxidative stress"/>
    <property type="evidence" value="ECO:0007669"/>
    <property type="project" value="TreeGrafter"/>
</dbReference>
<dbReference type="FunFam" id="1.10.3880.10:FF:000001">
    <property type="entry name" value="Probable Fe(2+)-trafficking protein"/>
    <property type="match status" value="1"/>
</dbReference>
<dbReference type="Gene3D" id="1.10.3880.10">
    <property type="entry name" value="Fe(II) trafficking protein YggX"/>
    <property type="match status" value="1"/>
</dbReference>
<dbReference type="HAMAP" id="MF_00686">
    <property type="entry name" value="Fe_traffic_YggX"/>
    <property type="match status" value="1"/>
</dbReference>
<dbReference type="InterPro" id="IPR007457">
    <property type="entry name" value="Fe_traffick_prot_YggX"/>
</dbReference>
<dbReference type="InterPro" id="IPR036766">
    <property type="entry name" value="Fe_traffick_prot_YggX_sf"/>
</dbReference>
<dbReference type="NCBIfam" id="NF003817">
    <property type="entry name" value="PRK05408.1"/>
    <property type="match status" value="1"/>
</dbReference>
<dbReference type="PANTHER" id="PTHR36965">
    <property type="entry name" value="FE(2+)-TRAFFICKING PROTEIN-RELATED"/>
    <property type="match status" value="1"/>
</dbReference>
<dbReference type="PANTHER" id="PTHR36965:SF1">
    <property type="entry name" value="FE(2+)-TRAFFICKING PROTEIN-RELATED"/>
    <property type="match status" value="1"/>
</dbReference>
<dbReference type="Pfam" id="PF04362">
    <property type="entry name" value="Iron_traffic"/>
    <property type="match status" value="1"/>
</dbReference>
<dbReference type="PIRSF" id="PIRSF029827">
    <property type="entry name" value="Fe_traffic_YggX"/>
    <property type="match status" value="1"/>
</dbReference>
<dbReference type="SUPFAM" id="SSF111148">
    <property type="entry name" value="YggX-like"/>
    <property type="match status" value="1"/>
</dbReference>
<reference key="1">
    <citation type="journal article" date="2001" name="Nature">
        <title>Complete genome sequence of a multiple drug resistant Salmonella enterica serovar Typhi CT18.</title>
        <authorList>
            <person name="Parkhill J."/>
            <person name="Dougan G."/>
            <person name="James K.D."/>
            <person name="Thomson N.R."/>
            <person name="Pickard D."/>
            <person name="Wain J."/>
            <person name="Churcher C.M."/>
            <person name="Mungall K.L."/>
            <person name="Bentley S.D."/>
            <person name="Holden M.T.G."/>
            <person name="Sebaihia M."/>
            <person name="Baker S."/>
            <person name="Basham D."/>
            <person name="Brooks K."/>
            <person name="Chillingworth T."/>
            <person name="Connerton P."/>
            <person name="Cronin A."/>
            <person name="Davis P."/>
            <person name="Davies R.M."/>
            <person name="Dowd L."/>
            <person name="White N."/>
            <person name="Farrar J."/>
            <person name="Feltwell T."/>
            <person name="Hamlin N."/>
            <person name="Haque A."/>
            <person name="Hien T.T."/>
            <person name="Holroyd S."/>
            <person name="Jagels K."/>
            <person name="Krogh A."/>
            <person name="Larsen T.S."/>
            <person name="Leather S."/>
            <person name="Moule S."/>
            <person name="O'Gaora P."/>
            <person name="Parry C."/>
            <person name="Quail M.A."/>
            <person name="Rutherford K.M."/>
            <person name="Simmonds M."/>
            <person name="Skelton J."/>
            <person name="Stevens K."/>
            <person name="Whitehead S."/>
            <person name="Barrell B.G."/>
        </authorList>
    </citation>
    <scope>NUCLEOTIDE SEQUENCE [LARGE SCALE GENOMIC DNA]</scope>
    <source>
        <strain>CT18</strain>
    </source>
</reference>
<reference key="2">
    <citation type="journal article" date="2003" name="J. Bacteriol.">
        <title>Comparative genomics of Salmonella enterica serovar Typhi strains Ty2 and CT18.</title>
        <authorList>
            <person name="Deng W."/>
            <person name="Liou S.-R."/>
            <person name="Plunkett G. III"/>
            <person name="Mayhew G.F."/>
            <person name="Rose D.J."/>
            <person name="Burland V."/>
            <person name="Kodoyianni V."/>
            <person name="Schwartz D.C."/>
            <person name="Blattner F.R."/>
        </authorList>
    </citation>
    <scope>NUCLEOTIDE SEQUENCE [LARGE SCALE GENOMIC DNA]</scope>
    <source>
        <strain>ATCC 700931 / Ty2</strain>
    </source>
</reference>
<keyword id="KW-0408">Iron</keyword>
<proteinExistence type="inferred from homology"/>
<feature type="initiator methionine" description="Removed" evidence="1">
    <location>
        <position position="1"/>
    </location>
</feature>
<feature type="chain" id="PRO_0000214504" description="Probable Fe(2+)-trafficking protein">
    <location>
        <begin position="2"/>
        <end position="91"/>
    </location>
</feature>
<gene>
    <name evidence="2" type="primary">yggX</name>
    <name type="ordered locus">STY3266</name>
    <name type="ordered locus">t3024</name>
</gene>